<feature type="chain" id="PRO_1000006871" description="Phenylalanine--tRNA ligase alpha subunit">
    <location>
        <begin position="1"/>
        <end position="338"/>
    </location>
</feature>
<feature type="binding site" evidence="1">
    <location>
        <position position="253"/>
    </location>
    <ligand>
        <name>Mg(2+)</name>
        <dbReference type="ChEBI" id="CHEBI:18420"/>
        <note>shared with beta subunit</note>
    </ligand>
</feature>
<sequence>MREQLEQLRCEAFQAIADASTGEALQNIRIKYLGRKGAMTALMKGLGALSAEERPVVGQMVNSIRDEIESGIEAGLFAARERARDEKLRSERIDVTLPGRRPGCGSKHPITLVIEEVCDIFAGLGFSVAEGPEIEHDWYNFEALNFPPEHPARDMQDTFFVDNNLLLRTHTSPVQIRTMLKRKPPLRIIAPGTVYRCDSDATHSPMFHQIEGLMVDQGVSFGDLKGILTIFTNQLFGQKTGVRLRPSFFPFTEPSAEVDIACVICGGKGCRVCKNSGWLEILGAGMVDPEVYRHVGYDAEAVSGFAFGMGIERIAMLKYGISDMRLLFENDVRFLRQF</sequence>
<name>SYFA_PELPD</name>
<accession>A1ARE1</accession>
<gene>
    <name evidence="1" type="primary">pheS</name>
    <name type="ordered locus">Ppro_2304</name>
</gene>
<organism>
    <name type="scientific">Pelobacter propionicus (strain DSM 2379 / NBRC 103807 / OttBd1)</name>
    <dbReference type="NCBI Taxonomy" id="338966"/>
    <lineage>
        <taxon>Bacteria</taxon>
        <taxon>Pseudomonadati</taxon>
        <taxon>Thermodesulfobacteriota</taxon>
        <taxon>Desulfuromonadia</taxon>
        <taxon>Desulfuromonadales</taxon>
        <taxon>Desulfuromonadaceae</taxon>
        <taxon>Pelobacter</taxon>
    </lineage>
</organism>
<reference key="1">
    <citation type="submission" date="2006-10" db="EMBL/GenBank/DDBJ databases">
        <title>Complete sequence of chromosome of Pelobacter propionicus DSM 2379.</title>
        <authorList>
            <consortium name="US DOE Joint Genome Institute"/>
            <person name="Copeland A."/>
            <person name="Lucas S."/>
            <person name="Lapidus A."/>
            <person name="Barry K."/>
            <person name="Detter J.C."/>
            <person name="Glavina del Rio T."/>
            <person name="Hammon N."/>
            <person name="Israni S."/>
            <person name="Dalin E."/>
            <person name="Tice H."/>
            <person name="Pitluck S."/>
            <person name="Saunders E."/>
            <person name="Brettin T."/>
            <person name="Bruce D."/>
            <person name="Han C."/>
            <person name="Tapia R."/>
            <person name="Schmutz J."/>
            <person name="Larimer F."/>
            <person name="Land M."/>
            <person name="Hauser L."/>
            <person name="Kyrpides N."/>
            <person name="Kim E."/>
            <person name="Lovley D."/>
            <person name="Richardson P."/>
        </authorList>
    </citation>
    <scope>NUCLEOTIDE SEQUENCE [LARGE SCALE GENOMIC DNA]</scope>
    <source>
        <strain>DSM 2379 / NBRC 103807 / OttBd1</strain>
    </source>
</reference>
<comment type="catalytic activity">
    <reaction evidence="1">
        <text>tRNA(Phe) + L-phenylalanine + ATP = L-phenylalanyl-tRNA(Phe) + AMP + diphosphate + H(+)</text>
        <dbReference type="Rhea" id="RHEA:19413"/>
        <dbReference type="Rhea" id="RHEA-COMP:9668"/>
        <dbReference type="Rhea" id="RHEA-COMP:9699"/>
        <dbReference type="ChEBI" id="CHEBI:15378"/>
        <dbReference type="ChEBI" id="CHEBI:30616"/>
        <dbReference type="ChEBI" id="CHEBI:33019"/>
        <dbReference type="ChEBI" id="CHEBI:58095"/>
        <dbReference type="ChEBI" id="CHEBI:78442"/>
        <dbReference type="ChEBI" id="CHEBI:78531"/>
        <dbReference type="ChEBI" id="CHEBI:456215"/>
        <dbReference type="EC" id="6.1.1.20"/>
    </reaction>
</comment>
<comment type="cofactor">
    <cofactor evidence="1">
        <name>Mg(2+)</name>
        <dbReference type="ChEBI" id="CHEBI:18420"/>
    </cofactor>
    <text evidence="1">Binds 2 magnesium ions per tetramer.</text>
</comment>
<comment type="subunit">
    <text evidence="1">Tetramer of two alpha and two beta subunits.</text>
</comment>
<comment type="subcellular location">
    <subcellularLocation>
        <location evidence="1">Cytoplasm</location>
    </subcellularLocation>
</comment>
<comment type="similarity">
    <text evidence="1">Belongs to the class-II aminoacyl-tRNA synthetase family. Phe-tRNA synthetase alpha subunit type 1 subfamily.</text>
</comment>
<keyword id="KW-0030">Aminoacyl-tRNA synthetase</keyword>
<keyword id="KW-0067">ATP-binding</keyword>
<keyword id="KW-0963">Cytoplasm</keyword>
<keyword id="KW-0436">Ligase</keyword>
<keyword id="KW-0460">Magnesium</keyword>
<keyword id="KW-0479">Metal-binding</keyword>
<keyword id="KW-0547">Nucleotide-binding</keyword>
<keyword id="KW-0648">Protein biosynthesis</keyword>
<keyword id="KW-1185">Reference proteome</keyword>
<proteinExistence type="inferred from homology"/>
<protein>
    <recommendedName>
        <fullName evidence="1">Phenylalanine--tRNA ligase alpha subunit</fullName>
        <ecNumber evidence="1">6.1.1.20</ecNumber>
    </recommendedName>
    <alternativeName>
        <fullName evidence="1">Phenylalanyl-tRNA synthetase alpha subunit</fullName>
        <shortName evidence="1">PheRS</shortName>
    </alternativeName>
</protein>
<evidence type="ECO:0000255" key="1">
    <source>
        <dbReference type="HAMAP-Rule" id="MF_00281"/>
    </source>
</evidence>
<dbReference type="EC" id="6.1.1.20" evidence="1"/>
<dbReference type="EMBL" id="CP000482">
    <property type="protein sequence ID" value="ABK99911.1"/>
    <property type="molecule type" value="Genomic_DNA"/>
</dbReference>
<dbReference type="RefSeq" id="WP_011736167.1">
    <property type="nucleotide sequence ID" value="NC_008609.1"/>
</dbReference>
<dbReference type="SMR" id="A1ARE1"/>
<dbReference type="STRING" id="338966.Ppro_2304"/>
<dbReference type="KEGG" id="ppd:Ppro_2304"/>
<dbReference type="eggNOG" id="COG0016">
    <property type="taxonomic scope" value="Bacteria"/>
</dbReference>
<dbReference type="HOGENOM" id="CLU_025086_0_1_7"/>
<dbReference type="OrthoDB" id="9800719at2"/>
<dbReference type="Proteomes" id="UP000006732">
    <property type="component" value="Chromosome"/>
</dbReference>
<dbReference type="GO" id="GO:0005737">
    <property type="term" value="C:cytoplasm"/>
    <property type="evidence" value="ECO:0007669"/>
    <property type="project" value="UniProtKB-SubCell"/>
</dbReference>
<dbReference type="GO" id="GO:0005524">
    <property type="term" value="F:ATP binding"/>
    <property type="evidence" value="ECO:0007669"/>
    <property type="project" value="UniProtKB-UniRule"/>
</dbReference>
<dbReference type="GO" id="GO:0000287">
    <property type="term" value="F:magnesium ion binding"/>
    <property type="evidence" value="ECO:0007669"/>
    <property type="project" value="UniProtKB-UniRule"/>
</dbReference>
<dbReference type="GO" id="GO:0004826">
    <property type="term" value="F:phenylalanine-tRNA ligase activity"/>
    <property type="evidence" value="ECO:0007669"/>
    <property type="project" value="UniProtKB-UniRule"/>
</dbReference>
<dbReference type="GO" id="GO:0000049">
    <property type="term" value="F:tRNA binding"/>
    <property type="evidence" value="ECO:0007669"/>
    <property type="project" value="InterPro"/>
</dbReference>
<dbReference type="GO" id="GO:0006432">
    <property type="term" value="P:phenylalanyl-tRNA aminoacylation"/>
    <property type="evidence" value="ECO:0007669"/>
    <property type="project" value="UniProtKB-UniRule"/>
</dbReference>
<dbReference type="CDD" id="cd00496">
    <property type="entry name" value="PheRS_alpha_core"/>
    <property type="match status" value="1"/>
</dbReference>
<dbReference type="FunFam" id="3.30.930.10:FF:000003">
    <property type="entry name" value="Phenylalanine--tRNA ligase alpha subunit"/>
    <property type="match status" value="1"/>
</dbReference>
<dbReference type="Gene3D" id="3.30.930.10">
    <property type="entry name" value="Bira Bifunctional Protein, Domain 2"/>
    <property type="match status" value="1"/>
</dbReference>
<dbReference type="HAMAP" id="MF_00281">
    <property type="entry name" value="Phe_tRNA_synth_alpha1"/>
    <property type="match status" value="1"/>
</dbReference>
<dbReference type="InterPro" id="IPR006195">
    <property type="entry name" value="aa-tRNA-synth_II"/>
</dbReference>
<dbReference type="InterPro" id="IPR045864">
    <property type="entry name" value="aa-tRNA-synth_II/BPL/LPL"/>
</dbReference>
<dbReference type="InterPro" id="IPR004529">
    <property type="entry name" value="Phe-tRNA-synth_IIc_asu"/>
</dbReference>
<dbReference type="InterPro" id="IPR004188">
    <property type="entry name" value="Phe-tRNA_ligase_II_N"/>
</dbReference>
<dbReference type="InterPro" id="IPR022911">
    <property type="entry name" value="Phe_tRNA_ligase_alpha1_bac"/>
</dbReference>
<dbReference type="InterPro" id="IPR002319">
    <property type="entry name" value="Phenylalanyl-tRNA_Synthase"/>
</dbReference>
<dbReference type="InterPro" id="IPR010978">
    <property type="entry name" value="tRNA-bd_arm"/>
</dbReference>
<dbReference type="NCBIfam" id="TIGR00468">
    <property type="entry name" value="pheS"/>
    <property type="match status" value="1"/>
</dbReference>
<dbReference type="PANTHER" id="PTHR11538:SF41">
    <property type="entry name" value="PHENYLALANINE--TRNA LIGASE, MITOCHONDRIAL"/>
    <property type="match status" value="1"/>
</dbReference>
<dbReference type="PANTHER" id="PTHR11538">
    <property type="entry name" value="PHENYLALANYL-TRNA SYNTHETASE"/>
    <property type="match status" value="1"/>
</dbReference>
<dbReference type="Pfam" id="PF02912">
    <property type="entry name" value="Phe_tRNA-synt_N"/>
    <property type="match status" value="1"/>
</dbReference>
<dbReference type="Pfam" id="PF01409">
    <property type="entry name" value="tRNA-synt_2d"/>
    <property type="match status" value="1"/>
</dbReference>
<dbReference type="SUPFAM" id="SSF55681">
    <property type="entry name" value="Class II aaRS and biotin synthetases"/>
    <property type="match status" value="1"/>
</dbReference>
<dbReference type="SUPFAM" id="SSF46589">
    <property type="entry name" value="tRNA-binding arm"/>
    <property type="match status" value="1"/>
</dbReference>
<dbReference type="PROSITE" id="PS50862">
    <property type="entry name" value="AA_TRNA_LIGASE_II"/>
    <property type="match status" value="1"/>
</dbReference>